<feature type="chain" id="PRO_0000193934" description="Iron-sulfur cluster assembly protein CyaY">
    <location>
        <begin position="1"/>
        <end position="108"/>
    </location>
</feature>
<keyword id="KW-0408">Iron</keyword>
<keyword id="KW-0479">Metal-binding</keyword>
<keyword id="KW-1185">Reference proteome</keyword>
<evidence type="ECO:0000255" key="1">
    <source>
        <dbReference type="HAMAP-Rule" id="MF_00142"/>
    </source>
</evidence>
<name>CYAY_BURPS</name>
<reference key="1">
    <citation type="journal article" date="2004" name="Proc. Natl. Acad. Sci. U.S.A.">
        <title>Genomic plasticity of the causative agent of melioidosis, Burkholderia pseudomallei.</title>
        <authorList>
            <person name="Holden M.T.G."/>
            <person name="Titball R.W."/>
            <person name="Peacock S.J."/>
            <person name="Cerdeno-Tarraga A.-M."/>
            <person name="Atkins T."/>
            <person name="Crossman L.C."/>
            <person name="Pitt T."/>
            <person name="Churcher C."/>
            <person name="Mungall K.L."/>
            <person name="Bentley S.D."/>
            <person name="Sebaihia M."/>
            <person name="Thomson N.R."/>
            <person name="Bason N."/>
            <person name="Beacham I.R."/>
            <person name="Brooks K."/>
            <person name="Brown K.A."/>
            <person name="Brown N.F."/>
            <person name="Challis G.L."/>
            <person name="Cherevach I."/>
            <person name="Chillingworth T."/>
            <person name="Cronin A."/>
            <person name="Crossett B."/>
            <person name="Davis P."/>
            <person name="DeShazer D."/>
            <person name="Feltwell T."/>
            <person name="Fraser A."/>
            <person name="Hance Z."/>
            <person name="Hauser H."/>
            <person name="Holroyd S."/>
            <person name="Jagels K."/>
            <person name="Keith K.E."/>
            <person name="Maddison M."/>
            <person name="Moule S."/>
            <person name="Price C."/>
            <person name="Quail M.A."/>
            <person name="Rabbinowitsch E."/>
            <person name="Rutherford K."/>
            <person name="Sanders M."/>
            <person name="Simmonds M."/>
            <person name="Songsivilai S."/>
            <person name="Stevens K."/>
            <person name="Tumapa S."/>
            <person name="Vesaratchavest M."/>
            <person name="Whitehead S."/>
            <person name="Yeats C."/>
            <person name="Barrell B.G."/>
            <person name="Oyston P.C.F."/>
            <person name="Parkhill J."/>
        </authorList>
    </citation>
    <scope>NUCLEOTIDE SEQUENCE [LARGE SCALE GENOMIC DNA]</scope>
    <source>
        <strain>K96243</strain>
    </source>
</reference>
<gene>
    <name evidence="1" type="primary">cyaY</name>
    <name type="ordered locus">BPSL3175</name>
</gene>
<organism>
    <name type="scientific">Burkholderia pseudomallei (strain K96243)</name>
    <dbReference type="NCBI Taxonomy" id="272560"/>
    <lineage>
        <taxon>Bacteria</taxon>
        <taxon>Pseudomonadati</taxon>
        <taxon>Pseudomonadota</taxon>
        <taxon>Betaproteobacteria</taxon>
        <taxon>Burkholderiales</taxon>
        <taxon>Burkholderiaceae</taxon>
        <taxon>Burkholderia</taxon>
        <taxon>pseudomallei group</taxon>
    </lineage>
</organism>
<protein>
    <recommendedName>
        <fullName evidence="1">Iron-sulfur cluster assembly protein CyaY</fullName>
    </recommendedName>
</protein>
<dbReference type="EMBL" id="BX571965">
    <property type="protein sequence ID" value="CAH37185.1"/>
    <property type="molecule type" value="Genomic_DNA"/>
</dbReference>
<dbReference type="RefSeq" id="WP_004196764.1">
    <property type="nucleotide sequence ID" value="NZ_CP009538.1"/>
</dbReference>
<dbReference type="RefSeq" id="YP_109768.1">
    <property type="nucleotide sequence ID" value="NC_006350.1"/>
</dbReference>
<dbReference type="SMR" id="Q63Q50"/>
<dbReference type="STRING" id="272560.BPSL3175"/>
<dbReference type="GeneID" id="93061793"/>
<dbReference type="KEGG" id="bps:BPSL3175"/>
<dbReference type="PATRIC" id="fig|272560.51.peg.2064"/>
<dbReference type="eggNOG" id="COG1965">
    <property type="taxonomic scope" value="Bacteria"/>
</dbReference>
<dbReference type="Proteomes" id="UP000000605">
    <property type="component" value="Chromosome 1"/>
</dbReference>
<dbReference type="GO" id="GO:0005829">
    <property type="term" value="C:cytosol"/>
    <property type="evidence" value="ECO:0007669"/>
    <property type="project" value="TreeGrafter"/>
</dbReference>
<dbReference type="GO" id="GO:0008199">
    <property type="term" value="F:ferric iron binding"/>
    <property type="evidence" value="ECO:0007669"/>
    <property type="project" value="InterPro"/>
</dbReference>
<dbReference type="GO" id="GO:0008198">
    <property type="term" value="F:ferrous iron binding"/>
    <property type="evidence" value="ECO:0007669"/>
    <property type="project" value="TreeGrafter"/>
</dbReference>
<dbReference type="GO" id="GO:0016226">
    <property type="term" value="P:iron-sulfur cluster assembly"/>
    <property type="evidence" value="ECO:0007669"/>
    <property type="project" value="UniProtKB-UniRule"/>
</dbReference>
<dbReference type="CDD" id="cd00503">
    <property type="entry name" value="Frataxin"/>
    <property type="match status" value="1"/>
</dbReference>
<dbReference type="Gene3D" id="3.30.920.10">
    <property type="entry name" value="Frataxin/CyaY"/>
    <property type="match status" value="1"/>
</dbReference>
<dbReference type="HAMAP" id="MF_00142">
    <property type="entry name" value="CyaY"/>
    <property type="match status" value="1"/>
</dbReference>
<dbReference type="InterPro" id="IPR047584">
    <property type="entry name" value="CyaY"/>
</dbReference>
<dbReference type="InterPro" id="IPR002908">
    <property type="entry name" value="Frataxin/CyaY"/>
</dbReference>
<dbReference type="InterPro" id="IPR036524">
    <property type="entry name" value="Frataxin/CyaY_sf"/>
</dbReference>
<dbReference type="InterPro" id="IPR020895">
    <property type="entry name" value="Frataxin_CS"/>
</dbReference>
<dbReference type="NCBIfam" id="TIGR03421">
    <property type="entry name" value="FeS_CyaY"/>
    <property type="match status" value="1"/>
</dbReference>
<dbReference type="PANTHER" id="PTHR16821">
    <property type="entry name" value="FRATAXIN"/>
    <property type="match status" value="1"/>
</dbReference>
<dbReference type="PANTHER" id="PTHR16821:SF2">
    <property type="entry name" value="FRATAXIN, MITOCHONDRIAL"/>
    <property type="match status" value="1"/>
</dbReference>
<dbReference type="Pfam" id="PF01491">
    <property type="entry name" value="Frataxin_Cyay"/>
    <property type="match status" value="1"/>
</dbReference>
<dbReference type="SMART" id="SM01219">
    <property type="entry name" value="Frataxin_Cyay"/>
    <property type="match status" value="1"/>
</dbReference>
<dbReference type="SUPFAM" id="SSF55387">
    <property type="entry name" value="Frataxin/Nqo15-like"/>
    <property type="match status" value="1"/>
</dbReference>
<dbReference type="PROSITE" id="PS01344">
    <property type="entry name" value="FRATAXIN_1"/>
    <property type="match status" value="1"/>
</dbReference>
<dbReference type="PROSITE" id="PS50810">
    <property type="entry name" value="FRATAXIN_2"/>
    <property type="match status" value="1"/>
</dbReference>
<sequence length="108" mass="11677">MSDTDYLTRAEAVLAAVERSVDAANDGDADIDLERNGSVLTLTFENGSKIIVNLQPPMKEVWIAAKAGGFHYRFVDGAWRDTRSGDEFFAALTGYATQQAGMPIAFSA</sequence>
<accession>Q63Q50</accession>
<proteinExistence type="inferred from homology"/>
<comment type="function">
    <text evidence="1">Involved in iron-sulfur (Fe-S) cluster assembly. May act as a regulator of Fe-S biogenesis.</text>
</comment>
<comment type="similarity">
    <text evidence="1">Belongs to the frataxin family.</text>
</comment>